<sequence>MSETRLFVGRIPPQATREDMMDFFKGYGQILDCKLMNGFGFVEVEDARDARDIVNDFQGKEFMGSRIVVEPARGERRRRENFRESAASKYPRPRRTGFRLIVENLSEDVSWQDLKDVMRKAGEPTFTDAHRENPGAGVVEFSTEEDMRNALTSLNGEVIKGQAVTLREDPDAANEPLPEVPSRFRSRSPPARRRYRDDYRRGGDYRRDAYRPGRDDERRYAPRGEYRRNNRDEYRRGGRDEYRRNSRSDYRRPHDDEYRRPRGDEYRPGRDEYRRSRDDGRPSHDDEYRRDAYSRSPSPRRDREENRSPAYEGSKSYSAAPEASMESSAPTESYDKPAASEEQQPLQNHSDVGNGSAEGQVAAEW</sequence>
<comment type="function">
    <text evidence="1">Has a role in pre-mRNA splicing where it is involved in spliceosome assembly.</text>
</comment>
<comment type="subcellular location">
    <subcellularLocation>
        <location evidence="5">Nucleus</location>
    </subcellularLocation>
</comment>
<comment type="PTM">
    <text evidence="1">Extensively phosphorylated on serine residues in the RS domain.</text>
</comment>
<comment type="similarity">
    <text evidence="5">Belongs to the splicing factor SR family.</text>
</comment>
<keyword id="KW-0507">mRNA processing</keyword>
<keyword id="KW-0508">mRNA splicing</keyword>
<keyword id="KW-0539">Nucleus</keyword>
<keyword id="KW-0597">Phosphoprotein</keyword>
<keyword id="KW-1185">Reference proteome</keyword>
<keyword id="KW-0677">Repeat</keyword>
<keyword id="KW-0694">RNA-binding</keyword>
<name>SRP2_SCHPO</name>
<reference key="1">
    <citation type="journal article" date="1998" name="Nucleic Acids Res.">
        <title>Identification and characterization of srp1, a gene of fission yeast encoding a RNA binding domain and a RS domain typical of SR splicing factors.</title>
        <authorList>
            <person name="Gross T."/>
            <person name="Richert K."/>
            <person name="Mierke C."/>
            <person name="Luetzelberger M."/>
            <person name="Kaeufer N.F."/>
        </authorList>
    </citation>
    <scope>NUCLEOTIDE SEQUENCE [GENOMIC DNA]</scope>
    <source>
        <strain>972 / ATCC 24843</strain>
    </source>
</reference>
<reference key="2">
    <citation type="journal article" date="2002" name="Nature">
        <title>The genome sequence of Schizosaccharomyces pombe.</title>
        <authorList>
            <person name="Wood V."/>
            <person name="Gwilliam R."/>
            <person name="Rajandream M.A."/>
            <person name="Lyne M.H."/>
            <person name="Lyne R."/>
            <person name="Stewart A."/>
            <person name="Sgouros J.G."/>
            <person name="Peat N."/>
            <person name="Hayles J."/>
            <person name="Baker S.G."/>
            <person name="Basham D."/>
            <person name="Bowman S."/>
            <person name="Brooks K."/>
            <person name="Brown D."/>
            <person name="Brown S."/>
            <person name="Chillingworth T."/>
            <person name="Churcher C.M."/>
            <person name="Collins M."/>
            <person name="Connor R."/>
            <person name="Cronin A."/>
            <person name="Davis P."/>
            <person name="Feltwell T."/>
            <person name="Fraser A."/>
            <person name="Gentles S."/>
            <person name="Goble A."/>
            <person name="Hamlin N."/>
            <person name="Harris D.E."/>
            <person name="Hidalgo J."/>
            <person name="Hodgson G."/>
            <person name="Holroyd S."/>
            <person name="Hornsby T."/>
            <person name="Howarth S."/>
            <person name="Huckle E.J."/>
            <person name="Hunt S."/>
            <person name="Jagels K."/>
            <person name="James K.D."/>
            <person name="Jones L."/>
            <person name="Jones M."/>
            <person name="Leather S."/>
            <person name="McDonald S."/>
            <person name="McLean J."/>
            <person name="Mooney P."/>
            <person name="Moule S."/>
            <person name="Mungall K.L."/>
            <person name="Murphy L.D."/>
            <person name="Niblett D."/>
            <person name="Odell C."/>
            <person name="Oliver K."/>
            <person name="O'Neil S."/>
            <person name="Pearson D."/>
            <person name="Quail M.A."/>
            <person name="Rabbinowitsch E."/>
            <person name="Rutherford K.M."/>
            <person name="Rutter S."/>
            <person name="Saunders D."/>
            <person name="Seeger K."/>
            <person name="Sharp S."/>
            <person name="Skelton J."/>
            <person name="Simmonds M.N."/>
            <person name="Squares R."/>
            <person name="Squares S."/>
            <person name="Stevens K."/>
            <person name="Taylor K."/>
            <person name="Taylor R.G."/>
            <person name="Tivey A."/>
            <person name="Walsh S.V."/>
            <person name="Warren T."/>
            <person name="Whitehead S."/>
            <person name="Woodward J.R."/>
            <person name="Volckaert G."/>
            <person name="Aert R."/>
            <person name="Robben J."/>
            <person name="Grymonprez B."/>
            <person name="Weltjens I."/>
            <person name="Vanstreels E."/>
            <person name="Rieger M."/>
            <person name="Schaefer M."/>
            <person name="Mueller-Auer S."/>
            <person name="Gabel C."/>
            <person name="Fuchs M."/>
            <person name="Duesterhoeft A."/>
            <person name="Fritzc C."/>
            <person name="Holzer E."/>
            <person name="Moestl D."/>
            <person name="Hilbert H."/>
            <person name="Borzym K."/>
            <person name="Langer I."/>
            <person name="Beck A."/>
            <person name="Lehrach H."/>
            <person name="Reinhardt R."/>
            <person name="Pohl T.M."/>
            <person name="Eger P."/>
            <person name="Zimmermann W."/>
            <person name="Wedler H."/>
            <person name="Wambutt R."/>
            <person name="Purnelle B."/>
            <person name="Goffeau A."/>
            <person name="Cadieu E."/>
            <person name="Dreano S."/>
            <person name="Gloux S."/>
            <person name="Lelaure V."/>
            <person name="Mottier S."/>
            <person name="Galibert F."/>
            <person name="Aves S.J."/>
            <person name="Xiang Z."/>
            <person name="Hunt C."/>
            <person name="Moore K."/>
            <person name="Hurst S.M."/>
            <person name="Lucas M."/>
            <person name="Rochet M."/>
            <person name="Gaillardin C."/>
            <person name="Tallada V.A."/>
            <person name="Garzon A."/>
            <person name="Thode G."/>
            <person name="Daga R.R."/>
            <person name="Cruzado L."/>
            <person name="Jimenez J."/>
            <person name="Sanchez M."/>
            <person name="del Rey F."/>
            <person name="Benito J."/>
            <person name="Dominguez A."/>
            <person name="Revuelta J.L."/>
            <person name="Moreno S."/>
            <person name="Armstrong J."/>
            <person name="Forsburg S.L."/>
            <person name="Cerutti L."/>
            <person name="Lowe T."/>
            <person name="McCombie W.R."/>
            <person name="Paulsen I."/>
            <person name="Potashkin J."/>
            <person name="Shpakovski G.V."/>
            <person name="Ussery D."/>
            <person name="Barrell B.G."/>
            <person name="Nurse P."/>
        </authorList>
    </citation>
    <scope>NUCLEOTIDE SEQUENCE [LARGE SCALE GENOMIC DNA]</scope>
    <source>
        <strain>972 / ATCC 24843</strain>
    </source>
</reference>
<reference key="3">
    <citation type="journal article" date="1997" name="DNA Res.">
        <title>Identification of open reading frames in Schizosaccharomyces pombe cDNAs.</title>
        <authorList>
            <person name="Yoshioka S."/>
            <person name="Kato K."/>
            <person name="Nakai K."/>
            <person name="Okayama H."/>
            <person name="Nojima H."/>
        </authorList>
    </citation>
    <scope>NUCLEOTIDE SEQUENCE [LARGE SCALE MRNA] OF 5-365</scope>
    <source>
        <strain>PR745</strain>
    </source>
</reference>
<reference key="4">
    <citation type="journal article" date="2008" name="J. Proteome Res.">
        <title>Phosphoproteome analysis of fission yeast.</title>
        <authorList>
            <person name="Wilson-Grady J.T."/>
            <person name="Villen J."/>
            <person name="Gygi S.P."/>
        </authorList>
    </citation>
    <scope>PHOSPHORYLATION [LARGE SCALE ANALYSIS] AT SER-186; SER-188; SER-276; SER-294; SER-296; SER-298 AND SER-308</scope>
    <scope>IDENTIFICATION BY MASS SPECTROMETRY</scope>
</reference>
<organism>
    <name type="scientific">Schizosaccharomyces pombe (strain 972 / ATCC 24843)</name>
    <name type="common">Fission yeast</name>
    <dbReference type="NCBI Taxonomy" id="284812"/>
    <lineage>
        <taxon>Eukaryota</taxon>
        <taxon>Fungi</taxon>
        <taxon>Dikarya</taxon>
        <taxon>Ascomycota</taxon>
        <taxon>Taphrinomycotina</taxon>
        <taxon>Schizosaccharomycetes</taxon>
        <taxon>Schizosaccharomycetales</taxon>
        <taxon>Schizosaccharomycetaceae</taxon>
        <taxon>Schizosaccharomyces</taxon>
    </lineage>
</organism>
<proteinExistence type="evidence at protein level"/>
<gene>
    <name type="primary">srp2</name>
    <name type="ORF">SPAC16.02c</name>
</gene>
<accession>P78814</accession>
<evidence type="ECO:0000250" key="1"/>
<evidence type="ECO:0000255" key="2">
    <source>
        <dbReference type="PROSITE-ProRule" id="PRU00176"/>
    </source>
</evidence>
<evidence type="ECO:0000256" key="3">
    <source>
        <dbReference type="SAM" id="MobiDB-lite"/>
    </source>
</evidence>
<evidence type="ECO:0000269" key="4">
    <source>
    </source>
</evidence>
<evidence type="ECO:0000305" key="5"/>
<feature type="chain" id="PRO_0000081963" description="Pre-mRNA-splicing factor srp2">
    <location>
        <begin position="1"/>
        <end position="365"/>
    </location>
</feature>
<feature type="domain" description="RRM 1" evidence="2">
    <location>
        <begin position="6"/>
        <end position="69"/>
    </location>
</feature>
<feature type="domain" description="RRM 2" evidence="2">
    <location>
        <begin position="100"/>
        <end position="166"/>
    </location>
</feature>
<feature type="region of interest" description="Disordered" evidence="3">
    <location>
        <begin position="166"/>
        <end position="365"/>
    </location>
</feature>
<feature type="compositionally biased region" description="Basic residues" evidence="3">
    <location>
        <begin position="184"/>
        <end position="194"/>
    </location>
</feature>
<feature type="compositionally biased region" description="Basic and acidic residues" evidence="3">
    <location>
        <begin position="195"/>
        <end position="307"/>
    </location>
</feature>
<feature type="compositionally biased region" description="Low complexity" evidence="3">
    <location>
        <begin position="316"/>
        <end position="332"/>
    </location>
</feature>
<feature type="compositionally biased region" description="Polar residues" evidence="3">
    <location>
        <begin position="341"/>
        <end position="353"/>
    </location>
</feature>
<feature type="modified residue" description="Phosphoserine" evidence="4">
    <location>
        <position position="186"/>
    </location>
</feature>
<feature type="modified residue" description="Phosphoserine" evidence="4">
    <location>
        <position position="188"/>
    </location>
</feature>
<feature type="modified residue" description="Phosphoserine" evidence="4">
    <location>
        <position position="276"/>
    </location>
</feature>
<feature type="modified residue" description="Phosphoserine" evidence="4">
    <location>
        <position position="294"/>
    </location>
</feature>
<feature type="modified residue" description="Phosphoserine" evidence="4">
    <location>
        <position position="296"/>
    </location>
</feature>
<feature type="modified residue" description="Phosphoserine" evidence="4">
    <location>
        <position position="298"/>
    </location>
</feature>
<feature type="modified residue" description="Phosphoserine" evidence="4">
    <location>
        <position position="308"/>
    </location>
</feature>
<dbReference type="EMBL" id="AF012278">
    <property type="protein sequence ID" value="AAC39357.1"/>
    <property type="molecule type" value="Genomic_DNA"/>
</dbReference>
<dbReference type="EMBL" id="CU329670">
    <property type="protein sequence ID" value="CAB57400.1"/>
    <property type="molecule type" value="Genomic_DNA"/>
</dbReference>
<dbReference type="EMBL" id="D89163">
    <property type="protein sequence ID" value="BAA13825.1"/>
    <property type="molecule type" value="mRNA"/>
</dbReference>
<dbReference type="PIR" id="T37730">
    <property type="entry name" value="T37730"/>
</dbReference>
<dbReference type="PIR" id="T42525">
    <property type="entry name" value="T42525"/>
</dbReference>
<dbReference type="RefSeq" id="NP_594570.1">
    <property type="nucleotide sequence ID" value="NM_001019999.2"/>
</dbReference>
<dbReference type="SMR" id="P78814"/>
<dbReference type="BioGRID" id="279221">
    <property type="interactions" value="24"/>
</dbReference>
<dbReference type="FunCoup" id="P78814">
    <property type="interactions" value="513"/>
</dbReference>
<dbReference type="STRING" id="284812.P78814"/>
<dbReference type="iPTMnet" id="P78814"/>
<dbReference type="PaxDb" id="4896-SPAC16.02c.1"/>
<dbReference type="EnsemblFungi" id="SPAC16.02c.1">
    <property type="protein sequence ID" value="SPAC16.02c.1:pep"/>
    <property type="gene ID" value="SPAC16.02c"/>
</dbReference>
<dbReference type="GeneID" id="2542772"/>
<dbReference type="KEGG" id="spo:2542772"/>
<dbReference type="PomBase" id="SPAC16.02c">
    <property type="gene designation" value="srp2"/>
</dbReference>
<dbReference type="VEuPathDB" id="FungiDB:SPAC16.02c"/>
<dbReference type="eggNOG" id="KOG0106">
    <property type="taxonomic scope" value="Eukaryota"/>
</dbReference>
<dbReference type="HOGENOM" id="CLU_012062_34_5_1"/>
<dbReference type="InParanoid" id="P78814"/>
<dbReference type="OMA" id="PREPAYP"/>
<dbReference type="PRO" id="PR:P78814"/>
<dbReference type="Proteomes" id="UP000002485">
    <property type="component" value="Chromosome I"/>
</dbReference>
<dbReference type="GO" id="GO:0005737">
    <property type="term" value="C:cytoplasm"/>
    <property type="evidence" value="ECO:0000318"/>
    <property type="project" value="GO_Central"/>
</dbReference>
<dbReference type="GO" id="GO:0005634">
    <property type="term" value="C:nucleus"/>
    <property type="evidence" value="ECO:0000314"/>
    <property type="project" value="PomBase"/>
</dbReference>
<dbReference type="GO" id="GO:0005681">
    <property type="term" value="C:spliceosomal complex"/>
    <property type="evidence" value="ECO:0000314"/>
    <property type="project" value="PomBase"/>
</dbReference>
<dbReference type="GO" id="GO:0003729">
    <property type="term" value="F:mRNA binding"/>
    <property type="evidence" value="ECO:0000269"/>
    <property type="project" value="PomBase"/>
</dbReference>
<dbReference type="GO" id="GO:0008143">
    <property type="term" value="F:poly(A) binding"/>
    <property type="evidence" value="ECO:0000266"/>
    <property type="project" value="PomBase"/>
</dbReference>
<dbReference type="GO" id="GO:0006397">
    <property type="term" value="P:mRNA processing"/>
    <property type="evidence" value="ECO:0007669"/>
    <property type="project" value="UniProtKB-KW"/>
</dbReference>
<dbReference type="GO" id="GO:0071028">
    <property type="term" value="P:nuclear mRNA surveillance"/>
    <property type="evidence" value="ECO:0000304"/>
    <property type="project" value="PomBase"/>
</dbReference>
<dbReference type="GO" id="GO:0008380">
    <property type="term" value="P:RNA splicing"/>
    <property type="evidence" value="ECO:0007669"/>
    <property type="project" value="UniProtKB-KW"/>
</dbReference>
<dbReference type="CDD" id="cd12339">
    <property type="entry name" value="RRM2_SRSF1_4_like"/>
    <property type="match status" value="1"/>
</dbReference>
<dbReference type="FunFam" id="3.30.70.330:FF:002029">
    <property type="match status" value="1"/>
</dbReference>
<dbReference type="Gene3D" id="3.30.70.330">
    <property type="match status" value="2"/>
</dbReference>
<dbReference type="InterPro" id="IPR012677">
    <property type="entry name" value="Nucleotide-bd_a/b_plait_sf"/>
</dbReference>
<dbReference type="InterPro" id="IPR035979">
    <property type="entry name" value="RBD_domain_sf"/>
</dbReference>
<dbReference type="InterPro" id="IPR000504">
    <property type="entry name" value="RRM_dom"/>
</dbReference>
<dbReference type="InterPro" id="IPR050374">
    <property type="entry name" value="RRT5_SRSF_SR"/>
</dbReference>
<dbReference type="PANTHER" id="PTHR23003">
    <property type="entry name" value="RNA RECOGNITION MOTIF RRM DOMAIN CONTAINING PROTEIN"/>
    <property type="match status" value="1"/>
</dbReference>
<dbReference type="PANTHER" id="PTHR23003:SF51">
    <property type="entry name" value="SERINE-ARGININE PROTEIN 55"/>
    <property type="match status" value="1"/>
</dbReference>
<dbReference type="Pfam" id="PF00076">
    <property type="entry name" value="RRM_1"/>
    <property type="match status" value="2"/>
</dbReference>
<dbReference type="SMART" id="SM00360">
    <property type="entry name" value="RRM"/>
    <property type="match status" value="2"/>
</dbReference>
<dbReference type="SUPFAM" id="SSF54928">
    <property type="entry name" value="RNA-binding domain, RBD"/>
    <property type="match status" value="1"/>
</dbReference>
<dbReference type="PROSITE" id="PS50102">
    <property type="entry name" value="RRM"/>
    <property type="match status" value="2"/>
</dbReference>
<protein>
    <recommendedName>
        <fullName>Pre-mRNA-splicing factor srp2</fullName>
    </recommendedName>
</protein>